<name>RS12_ACHLI</name>
<dbReference type="EMBL" id="CP000896">
    <property type="protein sequence ID" value="ABX80811.1"/>
    <property type="molecule type" value="Genomic_DNA"/>
</dbReference>
<dbReference type="RefSeq" id="WP_012242142.1">
    <property type="nucleotide sequence ID" value="NC_010163.1"/>
</dbReference>
<dbReference type="SMR" id="A9NEN1"/>
<dbReference type="STRING" id="441768.ACL_0185"/>
<dbReference type="GeneID" id="41338377"/>
<dbReference type="KEGG" id="acl:ACL_0185"/>
<dbReference type="eggNOG" id="COG0048">
    <property type="taxonomic scope" value="Bacteria"/>
</dbReference>
<dbReference type="HOGENOM" id="CLU_104295_1_2_14"/>
<dbReference type="OrthoDB" id="9802366at2"/>
<dbReference type="Proteomes" id="UP000008558">
    <property type="component" value="Chromosome"/>
</dbReference>
<dbReference type="GO" id="GO:0015935">
    <property type="term" value="C:small ribosomal subunit"/>
    <property type="evidence" value="ECO:0007669"/>
    <property type="project" value="InterPro"/>
</dbReference>
<dbReference type="GO" id="GO:0019843">
    <property type="term" value="F:rRNA binding"/>
    <property type="evidence" value="ECO:0007669"/>
    <property type="project" value="UniProtKB-UniRule"/>
</dbReference>
<dbReference type="GO" id="GO:0003735">
    <property type="term" value="F:structural constituent of ribosome"/>
    <property type="evidence" value="ECO:0007669"/>
    <property type="project" value="InterPro"/>
</dbReference>
<dbReference type="GO" id="GO:0000049">
    <property type="term" value="F:tRNA binding"/>
    <property type="evidence" value="ECO:0007669"/>
    <property type="project" value="UniProtKB-UniRule"/>
</dbReference>
<dbReference type="GO" id="GO:0006412">
    <property type="term" value="P:translation"/>
    <property type="evidence" value="ECO:0007669"/>
    <property type="project" value="UniProtKB-UniRule"/>
</dbReference>
<dbReference type="CDD" id="cd03368">
    <property type="entry name" value="Ribosomal_S12"/>
    <property type="match status" value="1"/>
</dbReference>
<dbReference type="FunFam" id="2.40.50.140:FF:000001">
    <property type="entry name" value="30S ribosomal protein S12"/>
    <property type="match status" value="1"/>
</dbReference>
<dbReference type="Gene3D" id="2.40.50.140">
    <property type="entry name" value="Nucleic acid-binding proteins"/>
    <property type="match status" value="1"/>
</dbReference>
<dbReference type="HAMAP" id="MF_00403_B">
    <property type="entry name" value="Ribosomal_uS12_B"/>
    <property type="match status" value="1"/>
</dbReference>
<dbReference type="InterPro" id="IPR012340">
    <property type="entry name" value="NA-bd_OB-fold"/>
</dbReference>
<dbReference type="InterPro" id="IPR006032">
    <property type="entry name" value="Ribosomal_uS12"/>
</dbReference>
<dbReference type="InterPro" id="IPR005679">
    <property type="entry name" value="Ribosomal_uS12_bac"/>
</dbReference>
<dbReference type="NCBIfam" id="TIGR00981">
    <property type="entry name" value="rpsL_bact"/>
    <property type="match status" value="1"/>
</dbReference>
<dbReference type="PANTHER" id="PTHR11652">
    <property type="entry name" value="30S RIBOSOMAL PROTEIN S12 FAMILY MEMBER"/>
    <property type="match status" value="1"/>
</dbReference>
<dbReference type="Pfam" id="PF00164">
    <property type="entry name" value="Ribosom_S12_S23"/>
    <property type="match status" value="1"/>
</dbReference>
<dbReference type="PRINTS" id="PR01034">
    <property type="entry name" value="RIBOSOMALS12"/>
</dbReference>
<dbReference type="SUPFAM" id="SSF50249">
    <property type="entry name" value="Nucleic acid-binding proteins"/>
    <property type="match status" value="1"/>
</dbReference>
<dbReference type="PROSITE" id="PS00055">
    <property type="entry name" value="RIBOSOMAL_S12"/>
    <property type="match status" value="1"/>
</dbReference>
<organism>
    <name type="scientific">Acholeplasma laidlawii (strain PG-8A)</name>
    <dbReference type="NCBI Taxonomy" id="441768"/>
    <lineage>
        <taxon>Bacteria</taxon>
        <taxon>Bacillati</taxon>
        <taxon>Mycoplasmatota</taxon>
        <taxon>Mollicutes</taxon>
        <taxon>Acholeplasmatales</taxon>
        <taxon>Acholeplasmataceae</taxon>
        <taxon>Acholeplasma</taxon>
    </lineage>
</organism>
<protein>
    <recommendedName>
        <fullName evidence="2">Small ribosomal subunit protein uS12</fullName>
    </recommendedName>
    <alternativeName>
        <fullName evidence="4">30S ribosomal protein S12</fullName>
    </alternativeName>
</protein>
<accession>A9NEN1</accession>
<gene>
    <name evidence="2" type="primary">rpsL</name>
    <name type="ordered locus">ACL_0185</name>
</gene>
<comment type="function">
    <text evidence="2">With S4 and S5 plays an important role in translational accuracy.</text>
</comment>
<comment type="function">
    <text evidence="2">Interacts with and stabilizes bases of the 16S rRNA that are involved in tRNA selection in the A site and with the mRNA backbone. Located at the interface of the 30S and 50S subunits, it traverses the body of the 30S subunit contacting proteins on the other side and probably holding the rRNA structure together. The combined cluster of proteins S8, S12 and S17 appears to hold together the shoulder and platform of the 30S subunit.</text>
</comment>
<comment type="subunit">
    <text evidence="2">Part of the 30S ribosomal subunit. Contacts proteins S8 and S17. May interact with IF1 in the 30S initiation complex.</text>
</comment>
<comment type="similarity">
    <text evidence="2">Belongs to the universal ribosomal protein uS12 family.</text>
</comment>
<proteinExistence type="inferred from homology"/>
<feature type="chain" id="PRO_1000080380" description="Small ribosomal subunit protein uS12">
    <location>
        <begin position="1"/>
        <end position="141"/>
    </location>
</feature>
<feature type="region of interest" description="Disordered" evidence="3">
    <location>
        <begin position="1"/>
        <end position="22"/>
    </location>
</feature>
<feature type="compositionally biased region" description="Polar residues" evidence="3">
    <location>
        <begin position="1"/>
        <end position="11"/>
    </location>
</feature>
<feature type="modified residue" description="3-methylthioaspartic acid" evidence="1">
    <location>
        <position position="102"/>
    </location>
</feature>
<reference key="1">
    <citation type="journal article" date="2011" name="J. Bacteriol.">
        <title>Complete genome and proteome of Acholeplasma laidlawii.</title>
        <authorList>
            <person name="Lazarev V.N."/>
            <person name="Levitskii S.A."/>
            <person name="Basovskii Y.I."/>
            <person name="Chukin M.M."/>
            <person name="Akopian T.A."/>
            <person name="Vereshchagin V.V."/>
            <person name="Kostrjukova E.S."/>
            <person name="Kovaleva G.Y."/>
            <person name="Kazanov M.D."/>
            <person name="Malko D.B."/>
            <person name="Vitreschak A.G."/>
            <person name="Sernova N.V."/>
            <person name="Gelfand M.S."/>
            <person name="Demina I.A."/>
            <person name="Serebryakova M.V."/>
            <person name="Galyamina M.A."/>
            <person name="Vtyurin N.N."/>
            <person name="Rogov S.I."/>
            <person name="Alexeev D.G."/>
            <person name="Ladygina V.G."/>
            <person name="Govorun V.M."/>
        </authorList>
    </citation>
    <scope>NUCLEOTIDE SEQUENCE [LARGE SCALE GENOMIC DNA]</scope>
    <source>
        <strain>PG-8A</strain>
    </source>
</reference>
<keyword id="KW-0488">Methylation</keyword>
<keyword id="KW-1185">Reference proteome</keyword>
<keyword id="KW-0687">Ribonucleoprotein</keyword>
<keyword id="KW-0689">Ribosomal protein</keyword>
<keyword id="KW-0694">RNA-binding</keyword>
<keyword id="KW-0699">rRNA-binding</keyword>
<keyword id="KW-0820">tRNA-binding</keyword>
<sequence>MPTISQLVTTSRQDKNYKSKSPALHYGFNSLKKEDSEYNSPQKRGVCTRVTTMTPKKPNSALRKYARVRLSNGTEVTAYIPGVGHSLQEHSVVLVRGGRVKDLPGVRYHIVRGALDATGVANRMQGRSKYGAKRPKAAKKK</sequence>
<evidence type="ECO:0000250" key="1"/>
<evidence type="ECO:0000255" key="2">
    <source>
        <dbReference type="HAMAP-Rule" id="MF_00403"/>
    </source>
</evidence>
<evidence type="ECO:0000256" key="3">
    <source>
        <dbReference type="SAM" id="MobiDB-lite"/>
    </source>
</evidence>
<evidence type="ECO:0000305" key="4"/>